<organismHost>
    <name type="scientific">Anopheles</name>
    <dbReference type="NCBI Taxonomy" id="44482"/>
</organismHost>
<organismHost>
    <name type="scientific">Homo sapiens</name>
    <name type="common">Human</name>
    <dbReference type="NCBI Taxonomy" id="9606"/>
</organismHost>
<organism>
    <name type="scientific">O'nyong-nyong virus (strain Igbo Ora)</name>
    <name type="common">ONNV</name>
    <name type="synonym">Igbo Ora virus</name>
    <dbReference type="NCBI Taxonomy" id="79899"/>
    <lineage>
        <taxon>Viruses</taxon>
        <taxon>Riboviria</taxon>
        <taxon>Orthornavirae</taxon>
        <taxon>Kitrinoviricota</taxon>
        <taxon>Alsuviricetes</taxon>
        <taxon>Martellivirales</taxon>
        <taxon>Togaviridae</taxon>
        <taxon>Alphavirus</taxon>
        <taxon>Onyong-nyong virus</taxon>
    </lineage>
</organism>
<protein>
    <recommendedName>
        <fullName>Polyprotein P1234</fullName>
        <shortName>P1234</shortName>
    </recommendedName>
    <alternativeName>
        <fullName>Non-structural polyprotein</fullName>
    </alternativeName>
    <component>
        <recommendedName>
            <fullName>Polyprotein P123</fullName>
            <shortName>P123</shortName>
        </recommendedName>
    </component>
    <component>
        <recommendedName>
            <fullName>mRNA-capping enzyme nsP1</fullName>
            <ecNumber evidence="4">2.1.1.-</ecNumber>
            <ecNumber evidence="4">2.7.7.-</ecNumber>
        </recommendedName>
        <alternativeName>
            <fullName>Non-structural protein 1</fullName>
        </alternativeName>
    </component>
    <component>
        <recommendedName>
            <fullName>Protease nsP2</fullName>
            <ecNumber evidence="6">3.4.22.-</ecNumber>
            <ecNumber evidence="6">3.6.1.15</ecNumber>
            <ecNumber evidence="3">3.6.1.74</ecNumber>
            <ecNumber evidence="6">3.6.4.13</ecNumber>
        </recommendedName>
        <alternativeName>
            <fullName>Non-structural protein 2</fullName>
            <shortName>nsP2</shortName>
        </alternativeName>
    </component>
    <component>
        <recommendedName>
            <fullName>Non-structural protein 3</fullName>
            <shortName>nsP3</shortName>
            <ecNumber evidence="6">3.1.3.84</ecNumber>
        </recommendedName>
    </component>
    <component>
        <recommendedName>
            <fullName>RNA-directed RNA polymerase nsP4</fullName>
            <ecNumber evidence="2">2.7.7.19</ecNumber>
            <ecNumber evidence="7">2.7.7.48</ecNumber>
        </recommendedName>
        <alternativeName>
            <fullName>Non-structural protein 4</fullName>
            <shortName>nsP4</shortName>
        </alternativeName>
    </component>
</protein>
<evidence type="ECO:0000250" key="1"/>
<evidence type="ECO:0000250" key="2">
    <source>
        <dbReference type="UniProtKB" id="P03317"/>
    </source>
</evidence>
<evidence type="ECO:0000250" key="3">
    <source>
        <dbReference type="UniProtKB" id="P08411"/>
    </source>
</evidence>
<evidence type="ECO:0000250" key="4">
    <source>
        <dbReference type="UniProtKB" id="P27282"/>
    </source>
</evidence>
<evidence type="ECO:0000250" key="5">
    <source>
        <dbReference type="UniProtKB" id="P36328"/>
    </source>
</evidence>
<evidence type="ECO:0000250" key="6">
    <source>
        <dbReference type="UniProtKB" id="Q8JUX6"/>
    </source>
</evidence>
<evidence type="ECO:0000255" key="7">
    <source>
        <dbReference type="PROSITE-ProRule" id="PRU00539"/>
    </source>
</evidence>
<evidence type="ECO:0000255" key="8">
    <source>
        <dbReference type="PROSITE-ProRule" id="PRU00853"/>
    </source>
</evidence>
<evidence type="ECO:0000255" key="9">
    <source>
        <dbReference type="PROSITE-ProRule" id="PRU00990"/>
    </source>
</evidence>
<evidence type="ECO:0000255" key="10">
    <source>
        <dbReference type="PROSITE-ProRule" id="PRU01079"/>
    </source>
</evidence>
<evidence type="ECO:0000269" key="11">
    <source>
    </source>
</evidence>
<evidence type="ECO:0000305" key="12"/>
<comment type="function">
    <molecule>Polyprotein P1234</molecule>
    <text evidence="6">Inactive precursor of the viral replicase, which is activated by cleavages carried out by the viral protease nsP2.</text>
</comment>
<comment type="function">
    <molecule>Polyprotein P123</molecule>
    <text evidence="2">The early replication complex formed by the polyprotein P123 and nsP4 synthesizes minus-strand RNAs (By similarity). As soon P123 is cleaved into mature proteins, the plus-strand RNAs synthesis begins (By similarity).</text>
</comment>
<comment type="function">
    <molecule>mRNA-capping enzyme nsP1</molecule>
    <text evidence="2 3 4 6 12">Cytoplasmic capping enzyme that catalyzes two virus-specific reactions: methyltransferase and nsP1 guanylyltransferase (By similarity). mRNA-capping is necessary since all viral RNAs are synthesized in the cytoplasm, and host capping enzymes are restricted to the nucleus (Probable). The enzymatic reaction involves a covalent link between 7-methyl-GMP and nsP1, whereas eukaryotic capping enzymes form a covalent complex only with GMP (Probable). nsP1 capping consists in the following reactions: GTP is first methylated into 7-methyl-GMP and then is covalently linked to nsP1 to form the m7GMp-nsP1 complex from which 7-methyl-GMP complex is transferred to the mRNA to create the cap structure (By similarity). NsP1 is also needed for the initiation of the minus-strand RNAs synthesis (By similarity). Probably serves as a membrane anchor for the replication complex composed of nsP1-nsP4 (By similarity). Palmitoylated nsP1 is remodeling host cell cytoskeleton, and induces filopodium-like structure formation at the surface of the host cell (By similarity).</text>
</comment>
<comment type="function">
    <molecule>Protease nsP2</molecule>
    <text evidence="2 3 6">Multifunctional protein whose N-terminus is part of the RNA polymerase complex and displays NTPase, RNA triphosphatase and helicase activities (By similarity). NTPase and RNA triphosphatase are involved in viral RNA capping and helicase keeps a check on the dsRNA replication intermediates (By similarity). The C-terminus harbors a protease that specifically cleaves the polyproteins and releases the mature proteins (By similarity). Required for the shutoff of minus-strand RNAs synthesis (By similarity). Specifically inhibits the host IFN response by promoting the nuclear export of host STAT1 (By similarity). Also inhibits host transcription by inducing the rapid proteasome-dependent degradation of POLR2A, a catalytic subunit of the RNAPII complex (By similarity). The resulting inhibition of cellular protein synthesis serves to ensure maximal viral gene expression and to evade host immune response (By similarity).</text>
</comment>
<comment type="function">
    <molecule>Non-structural protein 3</molecule>
    <text evidence="2 6">Seems to be essential for minus-strand RNAs and subgenomic 26S mRNAs synthesis (By similarity). Displays mono-ADP-ribosylhydrolase activity (By similarity). ADP-ribosylation is a post-translational modification that controls various processes of the host cell and the virus probably needs to revert it for optimal viral replication (By similarity). Binds proteins of G3BP family and sequesters them into the viral RNA replication complexes thereby inhibiting the formation of host stress granules on viral mRNAs (By similarity). The nsp3-G3BP complexes bind viral RNAs and probably orchestrate the assembly of viral replication complexes, thanks to the ability of G3BP family members to self-assemble and bind DNA (By similarity).</text>
</comment>
<comment type="function">
    <molecule>RNA-directed RNA polymerase nsP4</molecule>
    <text evidence="2">RNA dependent RNA polymerase (By similarity). Replicates genomic and antigenomic RNA by recognizing replications specific signals. The early replication complex formed by the polyprotein P123 and nsP4 synthesizes minus-strand RNAs (By similarity). The late replication complex composed of fully processed nsP1-nsP4 is responsible for the production of genomic and subgenomic plus-strand RNAs (By similarity).</text>
</comment>
<comment type="catalytic activity">
    <reaction evidence="4">
        <text>GTP + S-adenosyl-L-methionine = N(7)-methyl-GTP + S-adenosyl-L-homocysteine</text>
        <dbReference type="Rhea" id="RHEA:46948"/>
        <dbReference type="ChEBI" id="CHEBI:37565"/>
        <dbReference type="ChEBI" id="CHEBI:57856"/>
        <dbReference type="ChEBI" id="CHEBI:59789"/>
        <dbReference type="ChEBI" id="CHEBI:87133"/>
    </reaction>
</comment>
<comment type="catalytic activity">
    <reaction evidence="4">
        <text>N(7)-methyl-GTP + L-histidyl-[protein] = N(tele)-(N(7)-methylguanosine 5'-phospho)-L-histidyl-[protein] + diphosphate</text>
        <dbReference type="Rhea" id="RHEA:54792"/>
        <dbReference type="Rhea" id="RHEA-COMP:9745"/>
        <dbReference type="Rhea" id="RHEA-COMP:13995"/>
        <dbReference type="ChEBI" id="CHEBI:29979"/>
        <dbReference type="ChEBI" id="CHEBI:33019"/>
        <dbReference type="ChEBI" id="CHEBI:87133"/>
        <dbReference type="ChEBI" id="CHEBI:138334"/>
    </reaction>
    <physiologicalReaction direction="left-to-right" evidence="4">
        <dbReference type="Rhea" id="RHEA:54793"/>
    </physiologicalReaction>
</comment>
<comment type="catalytic activity">
    <reaction evidence="4">
        <text>N(tele)-(N(7)-methylguanosine 5'-phospho)-L-histidyl-[protein] + a 5'-end diphospho-(purine-ribonucleoside) in mRNA + H(+) = a 5'-end (N(7)-methyl 5'-triphosphoguanosine)-(purine-ribonucleoside) in mRNA + L-histidyl-[protein]</text>
        <dbReference type="Rhea" id="RHEA:54800"/>
        <dbReference type="Rhea" id="RHEA-COMP:9745"/>
        <dbReference type="Rhea" id="RHEA-COMP:12925"/>
        <dbReference type="Rhea" id="RHEA-COMP:13929"/>
        <dbReference type="Rhea" id="RHEA-COMP:13995"/>
        <dbReference type="ChEBI" id="CHEBI:15378"/>
        <dbReference type="ChEBI" id="CHEBI:29979"/>
        <dbReference type="ChEBI" id="CHEBI:133968"/>
        <dbReference type="ChEBI" id="CHEBI:138276"/>
        <dbReference type="ChEBI" id="CHEBI:138334"/>
    </reaction>
</comment>
<comment type="catalytic activity">
    <reaction evidence="3">
        <text>a 5'-end triphospho-ribonucleoside in mRNA + H2O = a 5'-end diphospho-ribonucleoside in mRNA + phosphate + H(+)</text>
        <dbReference type="Rhea" id="RHEA:67004"/>
        <dbReference type="Rhea" id="RHEA-COMP:17164"/>
        <dbReference type="Rhea" id="RHEA-COMP:17165"/>
        <dbReference type="ChEBI" id="CHEBI:15377"/>
        <dbReference type="ChEBI" id="CHEBI:15378"/>
        <dbReference type="ChEBI" id="CHEBI:43474"/>
        <dbReference type="ChEBI" id="CHEBI:167616"/>
        <dbReference type="ChEBI" id="CHEBI:167618"/>
        <dbReference type="EC" id="3.6.1.74"/>
    </reaction>
    <physiologicalReaction direction="left-to-right" evidence="3">
        <dbReference type="Rhea" id="RHEA:67005"/>
    </physiologicalReaction>
</comment>
<comment type="catalytic activity">
    <reaction evidence="6">
        <text>a ribonucleoside 5'-triphosphate + H2O = a ribonucleoside 5'-diphosphate + phosphate + H(+)</text>
        <dbReference type="Rhea" id="RHEA:23680"/>
        <dbReference type="ChEBI" id="CHEBI:15377"/>
        <dbReference type="ChEBI" id="CHEBI:15378"/>
        <dbReference type="ChEBI" id="CHEBI:43474"/>
        <dbReference type="ChEBI" id="CHEBI:57930"/>
        <dbReference type="ChEBI" id="CHEBI:61557"/>
        <dbReference type="EC" id="3.6.1.15"/>
    </reaction>
</comment>
<comment type="catalytic activity">
    <reaction evidence="6">
        <text>ATP + H2O = ADP + phosphate + H(+)</text>
        <dbReference type="Rhea" id="RHEA:13065"/>
        <dbReference type="ChEBI" id="CHEBI:15377"/>
        <dbReference type="ChEBI" id="CHEBI:15378"/>
        <dbReference type="ChEBI" id="CHEBI:30616"/>
        <dbReference type="ChEBI" id="CHEBI:43474"/>
        <dbReference type="ChEBI" id="CHEBI:456216"/>
        <dbReference type="EC" id="3.6.4.13"/>
    </reaction>
</comment>
<comment type="catalytic activity">
    <reaction evidence="7">
        <text>RNA(n) + a ribonucleoside 5'-triphosphate = RNA(n+1) + diphosphate</text>
        <dbReference type="Rhea" id="RHEA:21248"/>
        <dbReference type="Rhea" id="RHEA-COMP:14527"/>
        <dbReference type="Rhea" id="RHEA-COMP:17342"/>
        <dbReference type="ChEBI" id="CHEBI:33019"/>
        <dbReference type="ChEBI" id="CHEBI:61557"/>
        <dbReference type="ChEBI" id="CHEBI:140395"/>
        <dbReference type="EC" id="2.7.7.48"/>
    </reaction>
</comment>
<comment type="catalytic activity">
    <reaction evidence="6">
        <text>4-O-(ADP-D-ribosyl)-L-aspartyl-[protein] + H2O = L-aspartyl-[protein] + ADP-D-ribose + H(+)</text>
        <dbReference type="Rhea" id="RHEA:54428"/>
        <dbReference type="Rhea" id="RHEA-COMP:9867"/>
        <dbReference type="Rhea" id="RHEA-COMP:13832"/>
        <dbReference type="ChEBI" id="CHEBI:15377"/>
        <dbReference type="ChEBI" id="CHEBI:15378"/>
        <dbReference type="ChEBI" id="CHEBI:29961"/>
        <dbReference type="ChEBI" id="CHEBI:57967"/>
        <dbReference type="ChEBI" id="CHEBI:138102"/>
    </reaction>
    <physiologicalReaction direction="left-to-right" evidence="6">
        <dbReference type="Rhea" id="RHEA:54429"/>
    </physiologicalReaction>
</comment>
<comment type="catalytic activity">
    <reaction evidence="6">
        <text>5-O-(ADP-D-ribosyl)-L-glutamyl-[protein] + H2O = L-glutamyl-[protein] + ADP-D-ribose + H(+)</text>
        <dbReference type="Rhea" id="RHEA:58248"/>
        <dbReference type="Rhea" id="RHEA-COMP:10208"/>
        <dbReference type="Rhea" id="RHEA-COMP:15089"/>
        <dbReference type="ChEBI" id="CHEBI:15377"/>
        <dbReference type="ChEBI" id="CHEBI:15378"/>
        <dbReference type="ChEBI" id="CHEBI:29973"/>
        <dbReference type="ChEBI" id="CHEBI:57967"/>
        <dbReference type="ChEBI" id="CHEBI:142540"/>
    </reaction>
    <physiologicalReaction direction="left-to-right" evidence="6">
        <dbReference type="Rhea" id="RHEA:58249"/>
    </physiologicalReaction>
</comment>
<comment type="catalytic activity">
    <reaction evidence="2">
        <text>RNA(n) + ATP = RNA(n)-3'-adenine ribonucleotide + diphosphate</text>
        <dbReference type="Rhea" id="RHEA:11332"/>
        <dbReference type="Rhea" id="RHEA-COMP:14527"/>
        <dbReference type="Rhea" id="RHEA-COMP:17347"/>
        <dbReference type="ChEBI" id="CHEBI:30616"/>
        <dbReference type="ChEBI" id="CHEBI:33019"/>
        <dbReference type="ChEBI" id="CHEBI:140395"/>
        <dbReference type="ChEBI" id="CHEBI:173115"/>
        <dbReference type="EC" id="2.7.7.19"/>
    </reaction>
</comment>
<comment type="catalytic activity">
    <reaction evidence="6">
        <text>ADP-alpha-D-ribose 1''-phosphate + H2O = ADP-D-ribose + phosphate</text>
        <dbReference type="Rhea" id="RHEA:25029"/>
        <dbReference type="ChEBI" id="CHEBI:15377"/>
        <dbReference type="ChEBI" id="CHEBI:43474"/>
        <dbReference type="ChEBI" id="CHEBI:57967"/>
        <dbReference type="ChEBI" id="CHEBI:58753"/>
        <dbReference type="EC" id="3.1.3.84"/>
    </reaction>
    <physiologicalReaction direction="left-to-right" evidence="6">
        <dbReference type="Rhea" id="RHEA:25030"/>
    </physiologicalReaction>
</comment>
<comment type="cofactor">
    <cofactor evidence="2">
        <name>Mg(2+)</name>
        <dbReference type="ChEBI" id="CHEBI:18420"/>
    </cofactor>
    <cofactor evidence="2">
        <name>Mn(2+)</name>
        <dbReference type="ChEBI" id="CHEBI:29035"/>
    </cofactor>
    <text evidence="2">For nsP4 adenylyltransferase activity; Mn(2+) supports catalysis at 60% of the levels observed with Mg(2+).</text>
</comment>
<comment type="cofactor">
    <cofactor>
        <name>Mg(2+)</name>
        <dbReference type="ChEBI" id="CHEBI:18420"/>
    </cofactor>
    <text evidence="2">For nsP4 RNA-directed RNA polymerase activity.</text>
</comment>
<comment type="cofactor">
    <cofactor evidence="4">
        <name>Mg(2+)</name>
        <dbReference type="ChEBI" id="CHEBI:18420"/>
    </cofactor>
    <text evidence="4">For nsP1 guanylylation.</text>
</comment>
<comment type="cofactor">
    <cofactor>
        <name>Mg(2+)</name>
        <dbReference type="ChEBI" id="CHEBI:18420"/>
    </cofactor>
    <text evidence="6">For nsP2 RNA triphosphatase activity.</text>
</comment>
<comment type="cofactor">
    <cofactor>
        <name>Mg(2+)</name>
        <dbReference type="ChEBI" id="CHEBI:18420"/>
    </cofactor>
    <text evidence="6">For nsP2 NTPase activity.</text>
</comment>
<comment type="subunit">
    <molecule>mRNA-capping enzyme nsP1</molecule>
    <text evidence="2 4 6">Interacts with non-structural protein 3 (By similarity). Interacts with RNA-directed RNA polymerase nsP4 (By similarity). Interacts with protease nsP2 (By similarity). interacts with itself (By similarity).</text>
</comment>
<comment type="subunit">
    <molecule>Non-structural protein 3</molecule>
    <text evidence="2 4 6">Interacts with mRNA-capping enzyme nsP1 (By similarity). Interacts with host DDX1 (By similarity). Interacts with host DDX3 (By similarity). Interacts (via C-terminus) with host G3BP1; this interaction inhibits the formation of host stress granules on viral mRNAs and the nsp3-G3BP1 complexes bind viral RNAs and probably orchestrate the assembly of viral replication complexes (By similarity). Interacts (via C-terminus) with host G3BP2; this interaction inhibits the formation of host stress granules on viral mRNAs and the nsp3-G3BP2 complexes bind viral RNAs and probably orchestrate the assembly of viral replication complexes (By similarity).</text>
</comment>
<comment type="subunit">
    <molecule>RNA-directed RNA polymerase nsP4</molecule>
    <text evidence="1">Interacts with mRNA-capping enzyme nsP1 (By similarity). Interacts with protease nsP2 (By similarity). interacts with itself (By similarity).</text>
</comment>
<comment type="subunit">
    <molecule>Protease nsP2</molecule>
    <text evidence="2 4 6">Interacts with RNA-directed RNA polymerase nsP4 (By similarity). Interacts with mRNA-capping enzyme nsP1 (By similarity). Interacts with KPNA1/karyopherin-alpha1; this interaction probably allows the active transport of protease nsP2 into the host nucleus (By similarity).</text>
</comment>
<comment type="subcellular location">
    <molecule>Polyprotein P1234</molecule>
    <subcellularLocation>
        <location evidence="12">Host cytoplasmic vesicle membrane</location>
        <topology evidence="12">Peripheral membrane protein</topology>
    </subcellularLocation>
    <text evidence="12">Part of cytoplasmic vesicles, which are probably formed at the plasma membrane and internalized leading to late endosomal/lysosomal spherules containing the replication complex.</text>
</comment>
<comment type="subcellular location">
    <molecule>Polyprotein P123</molecule>
    <subcellularLocation>
        <location evidence="12">Host cytoplasmic vesicle membrane</location>
        <topology evidence="12">Peripheral membrane protein</topology>
    </subcellularLocation>
    <text evidence="12">Part of cytoplasmic vesicles, which are probably formed at the plasma membrane and internalized leading to late endosomal/lysosomal spherules containing the replication complex.</text>
</comment>
<comment type="subcellular location">
    <molecule>mRNA-capping enzyme nsP1</molecule>
    <subcellularLocation>
        <location evidence="3">Host cytoplasmic vesicle membrane</location>
        <topology evidence="3">Lipid-anchor</topology>
    </subcellularLocation>
    <subcellularLocation>
        <location evidence="3">Host cell membrane</location>
        <topology evidence="3">Lipid-anchor</topology>
        <orientation evidence="3">Cytoplasmic side</orientation>
    </subcellularLocation>
    <subcellularLocation>
        <location evidence="6">Host cell projection</location>
        <location evidence="6">Host filopodium</location>
    </subcellularLocation>
    <text evidence="3 6">In the late phase of infection, the polyprotein is quickly cleaved before localization to cellular membranes. Then a fraction of nsP1 localizes to the inner surface of the plasma membrane and its filopodial extensions. Only the palmitoylated nsP1 localizes to the host filopodia (By similarity). NsP1 is also part of cytoplasmic vesicles, which are probably formed at the plasma membrane and internalized leading to late endosomal/lysosomal spherules containing the replication complex (By similarity).</text>
</comment>
<comment type="subcellular location">
    <molecule>Protease nsP2</molecule>
    <subcellularLocation>
        <location evidence="3">Host cytoplasmic vesicle membrane</location>
        <topology evidence="3">Peripheral membrane protein</topology>
    </subcellularLocation>
    <subcellularLocation>
        <location evidence="4">Host nucleus</location>
    </subcellularLocation>
    <subcellularLocation>
        <location evidence="4">Host cytoplasm</location>
    </subcellularLocation>
    <text evidence="3 4">In the late phase of infection, the polyprotein is quickly cleaved before localization to cellular membranes. Then approximately half of nsP2 is found in the nucleus (By similarity). Shuttles between cytoplasm and nucleus (By similarity). NsP2 is also part of cytoplasmic vesicles, which are probably formed at the plasma membrane and internalized leading to late endosomal/lysosomal spherules containing the replication complex (By similarity).</text>
</comment>
<comment type="subcellular location">
    <molecule>Non-structural protein 3</molecule>
    <subcellularLocation>
        <location evidence="2">Host cytoplasmic vesicle membrane</location>
        <topology evidence="12">Peripheral membrane protein</topology>
    </subcellularLocation>
    <text evidence="2">In the late phase of infection, the polyprotein is quickly cleaved before localization to cellular membranes. Then nsP3 forms aggregates in cytoplasm (By similarity). NsP3 is also part of cytoplasmic vesicles, which are probably formed at the plasma membrane and internalized leading to late endosomal/lysosomal spherules containing the replication complex (By similarity).</text>
</comment>
<comment type="subcellular location">
    <molecule>RNA-directed RNA polymerase nsP4</molecule>
    <subcellularLocation>
        <location>Host cytoplasmic vesicle membrane</location>
        <topology evidence="3">Peripheral membrane protein</topology>
    </subcellularLocation>
    <text evidence="3">NsP4 is part of cytoplasmic vesicles, which are probably formed at the plasma membrane and internalized leading to late endosomal/lysosomal spherules containing the replication complex.</text>
</comment>
<comment type="domain">
    <molecule>Protease nsP2</molecule>
    <text evidence="4 6">The N-terminus exhibits NTPase and RNA triphosphatase activities and is proposed to have helicase activity, whereas the C-terminus possesses protease activity (By similarity). Contains a nuclear localization signal and a nuclear export signal, these two motifs are probably involved in the shuttling between the cytoplasm and the nucleus of nsP2 (By similarity). The C-terminus is required for promoting the export of host STAT1 (By similarity).</text>
</comment>
<comment type="domain">
    <molecule>Non-structural protein 3</molecule>
    <text evidence="2 6">In the N-terminus, the macro domain displays a mono-ADP-ribosylhydrolase activity (By similarity). The central part has a zinc-binding function (By similarity). The C-terminus contains two FGDF motifs necessary and sufficient for formation of the nsP3/G3BP1 complex (By similarity).</text>
</comment>
<comment type="PTM">
    <molecule>Polyprotein P1234</molecule>
    <text evidence="2">Specific enzymatic cleavages in vivo yield mature proteins (By similarity). The processing of the polyprotein is temporally regulated (By similarity). In early stages (1.7 hpi), P1234 is first cleaved in trans through its nsP2 protease activity, releasing P123 and nsP4, which associate to form the early replication complex (By similarity). At the same time, P1234 is also cut at the nsP1/nsP2 site early in infection but with lower efficiency (By similarity). After replication of the viral minus-strand RNAs (4 hpi), the polyproteins are cut at the nsP1/nsP2 and nsP2/nsP3 sites very efficiently, preventing accumulation of P123 and P1234 and allowing the formation of the late replication complex (By similarity). NsP3/nsP4 site is not cleaved anymore and P34 is produced rather than nsP4 (By similarity).</text>
</comment>
<comment type="PTM">
    <molecule>Polyprotein P123</molecule>
    <text evidence="2">Specific enzymatic cleavages in vivo yield mature proteins (By similarity). The processing of the polyprotein is temporally regulated (By similarity). In early stages (1.7 hpi), P123 is cleaved at the nsP1/nsP2 site with low efficiency (By similarity). After replication of the viral minus-strand RNAs (4 hpi), the polyproteins are cut at the nsP1/nsP2 and nsP2/nsP3 sites very efficiently, preventing accumulation of P123 and allowing the formation of the late replication complex (By similarity).</text>
</comment>
<comment type="PTM">
    <molecule>mRNA-capping enzyme nsP1</molecule>
    <text evidence="6">Palmitoylated by host palmitoyltransferases ZDHHC2 and ZDHHC19.</text>
</comment>
<comment type="PTM">
    <molecule>Non-structural protein 3</molecule>
    <text evidence="3">Phosphorylated by host on serines and threonines.</text>
</comment>
<comment type="PTM">
    <molecule>RNA-directed RNA polymerase nsP4</molecule>
    <text evidence="2">Ubiquitinated; targets the protein for rapid degradation via the ubiquitin system (By similarity). Nsp4 is present in extremely low quantities due to low frequency of translation through the amber stop-codon and the degradation by the ubiquitin pathway (By similarity).</text>
</comment>
<comment type="miscellaneous">
    <text evidence="2">Viral replication produces dsRNA in the late phase of infection, resulting in a strong activation of host EIF2AK2/PKR, leading to almost complete phosphorylation of EIF2A (By similarity). This inactivates completely cellular translation initiation, resulting shutoff of host proteins synthesis (By similarity). However, phosphorylation of EIF2A is probably not the only mechanism responsible for the host translation shutoff (By similarity). The viral translation can still occur normally because it relies on a hairpin structure in the coding region of sgRNA and is EIF2A-, EIF2D-, EIF4G- EIF4A-independent (By similarity).</text>
</comment>
<comment type="caution">
    <text evidence="11">There is no stop codon readthrough before nsP4 like in other ONNV strains (PubMed:9875334). The opal termination codon has probably been mutated to a sense codon on passage in cell culture (PubMed:9875334). The presence of the opal codon may be a requirement for viral maintenance in both vertebrate and invertebrate hosts and a selective advantage may be conferred in cell culture for the sense codon (PubMed:9875334).</text>
</comment>
<accession>O90370</accession>
<sequence length="2513" mass="280051">MDSVYVDIDADSAFLKALQRAYPMFEVEPKQVTPNDHANARAFSHLAIKLIEQEIDPGSTILGIGSAPARRMMSDRKYHCVCPMRSAEDPERLANYARKLASAAGKVTDKNISGKINDLQAVMAVPNMETSTFCLHTDATCKQRGDVAIYQDVYAVHAPTSLYHQAIKGVHVAYWIGFDTTPFMYNAMAGAYPSYSTNWADEQVLKAKNIGLCSTDLSEGRRGKLSIMRGKKFKPCDRVLFSVGSTLYPESRKLLQSWHLPSVFHLKGKLSFTCRCDTIVSCEGYVVKRVTMSPGIYGKTSGYAVTHHADGFLMCKTTDTVDGERVSFSVCTYVPATICDQMTGILATEVTPEDAQKLLVGLNQRIVVNGRTQRNTNTMKNYLLPIVAQAFSKWAKECRKDMEDEKLLGVRERTLTCCCLWAFRKHKTHTVYKRPDTQSIQKVPAEFDSFVIPSLWSSGLSIPLRTRIKWLLSKAPKHEQLPHSGNAEEAAQAETDAVEEREAELTREAMPPLQATQDDVQVEIDVEQLEDRAGAGIVETPRGAIKVTAQPSDLVVGEYLVLTPQAVLRSQKLGLIHALAEQVKTCTHSGRAGRYAVEAYDGRVLVPSGYAIPQEDFQSLSESATMVFNEREFVNRKLHHIAMHGPALNTDEESYELVRVEKTEHEYVYDVDQKKCCKREEATGLVLVGDLTSPPYHEFAYEGLKIRPACPYKTAVIGVFGVPGSGKSAIIKNLVTRQDLVTSGKKENCQEISNDVMRQRKLEISARTVDSLLLNGCNKPVEVLYVDEAFACHSGTLLALIAMVRPRQKVVLCGDPKQCGFFNMMQMKVNYNHNICTQVYHKSISRRCTLPVTAIVSSLHYESKMRTTNEYNQPIVVDTTGTTKPEPGDLVLTCFRGWVKQLQIDYRGNEVMTAAASQGLTRKGVYAVRQKVNENPLYASTSEHVNVLLTRTEGKLIWKTLSGDPWIKILQNPPKGNFKATIKEWEAEHASIMAGICNYQMAFDTFQNKANVCWAKCLVPILDTAGIKLSDRQWSQIVQAFKEDRAYSPEVALNEICTRIYGVDLDSGLFSKPLISVYYADNHWDNRPGGKMFGFNPEVALMLEKKYPFTKGKWNINKQICITTRKVDEFNPETNIIPANRRLPHSLVAEHHSVRGERMEWLVNKINGHHMLLVSGYNLILPTKRVTWVAPLGTRGADYTYNLELGLPATLGRYDLVVINIHTPFRIHHYQQCVDHAMKLQMLGGDSLRLLKPGGSLLIRAYGYADRTSERVISVLGRKFRSSRALKPQCITSNTEMFFLFSRFDNGRRNFTTHVMNNQLNAVYAGLATRAGCAPSYRVKRMDIAKNTEECVVNAANPRGVPGDGVCKAVYRKWPESFRNSATPVGTAKTIMCGQYPVIHAVGPNFSNYSEAEGDRELASAYREVAKEVSRLGVSSVAIPLLSTGVYSGGKDRLLQSLNHLFAAMDSTDADVVIYCRDKEWEKKITEAISLRSQVELLDDHISVDCDIVRVHPDSSLAGRKGYSTVEGALYSYLEGTRFHQTAVDMAEIYTMWPKQTEANEQVCLYALGESIESVRQKCPVDDADASFPPKTVPCLCRYAMTPERVARLRMNHTTSIIVCSSFPLPKYKIEGVQKVKCSKALLFDHNVPSRVSPRTYRPADEIIQTPQISTEACQDAQLVQSINDEAVPVPSDLEACDATMDWPSIGTVPTRQRHDSFDSEYSSRSNIQLVTADVHAPMYANSLASSGGSMLSLSSEPAQNGIMILPDSEDTDSISRVSTPIAPPRRRLGRTINVTCDEREGKILPMASDRFFTAKPYTVALSVSTADITAYPIQAPLGLTQPPTLEQITFGDFAEGEIDNLLTGALTFGDFEPGEVEELTDSEWSTCSDTDEELRLDRAGGYIFSSDTGQGHLQQKSVRQTTLPVNIVEEVHEEKCYPPKLDETKEQLLLKRLQESASTANRSRYQSRKVENMKATIIHRLKEGCRLYLASDTPRVPSYRITYPAPVYSPSINIKLSNPETAVAVCNEFLARNYPTVASYQVTDEYDAYLDMVDGSESCLDRATFNPSKLRSYPKQHSYHAPTIRSAVPSPFQNTLQNVLAAATKRNCNVTQMRELPTMDSAVFNVECFKKYACNQEYWREFASSPIRVTTENLTMYVTKLKGPKAAALFAKTHNLLPLQEVPMDRFTMDMKRDVKVTPGTKHTEERPKVQVIQAAEPLATAYLCGIHRELVRRLNAVLLPNVHTLFDMSAEDFDAIIATHFKPGDAVLETDIASFDKSQDDSLALTAMMLLEDLGVDQPILDLIEAAFGEISSCHLPTGTRFKFGAMMKSGMFLTLFVNTLLNITIASRVLEERLTTSACAAFIGDDNIIHGVVSDALMAARCATWMNMEVKIIDAVVSEKAPYFCGGFILHDTVTGTSCRVADPLKRLFKLGKPLAAGDEQDEDRRRALADEVTRWQRTGLVTELEKAVYSRYEVQGITAVITSMATFASSKENFKKLRGPVVTLYGGPK</sequence>
<name>POLN_ONNVI</name>
<feature type="chain" id="PRO_0000308398" description="Polyprotein P1234">
    <location>
        <begin position="1"/>
        <end position="2513"/>
    </location>
</feature>
<feature type="chain" id="PRO_0000229933" description="Polyprotein P123">
    <location>
        <begin position="1"/>
        <end position="1902"/>
    </location>
</feature>
<feature type="chain" id="PRO_0000229934" description="mRNA-capping enzyme nsP1" evidence="1">
    <location>
        <begin position="1"/>
        <end position="535"/>
    </location>
</feature>
<feature type="chain" id="PRO_0000229935" description="Protease nsP2">
    <location>
        <begin position="536"/>
        <end position="1333"/>
    </location>
</feature>
<feature type="chain" id="PRO_0000229936" description="Non-structural protein 3">
    <location>
        <begin position="1334"/>
        <end position="1902"/>
    </location>
</feature>
<feature type="chain" id="PRO_0000229937" description="RNA-directed RNA polymerase nsP4">
    <location>
        <begin position="1903"/>
        <end position="2513"/>
    </location>
</feature>
<feature type="domain" description="Alphavirus-like MT" evidence="10">
    <location>
        <begin position="28"/>
        <end position="259"/>
    </location>
</feature>
<feature type="domain" description="(+)RNA virus helicase ATP-binding" evidence="9">
    <location>
        <begin position="690"/>
        <end position="842"/>
    </location>
</feature>
<feature type="domain" description="(+)RNA virus helicase C-terminal" evidence="9">
    <location>
        <begin position="843"/>
        <end position="991"/>
    </location>
</feature>
<feature type="domain" description="Peptidase C9" evidence="8">
    <location>
        <begin position="1004"/>
        <end position="1327"/>
    </location>
</feature>
<feature type="domain" description="RdRp catalytic" evidence="7">
    <location>
        <begin position="2267"/>
        <end position="2382"/>
    </location>
</feature>
<feature type="region of interest" description="NsP1 membrane-binding" evidence="3">
    <location>
        <begin position="244"/>
        <end position="263"/>
    </location>
</feature>
<feature type="region of interest" description="Nucleolus localization signal" evidence="3">
    <location>
        <begin position="1005"/>
        <end position="1024"/>
    </location>
</feature>
<feature type="short sequence motif" description="Nuclear export signal" evidence="4">
    <location>
        <begin position="1058"/>
        <end position="1067"/>
    </location>
</feature>
<feature type="short sequence motif" description="Nuclear localization signal" evidence="3">
    <location>
        <begin position="1182"/>
        <end position="1186"/>
    </location>
</feature>
<feature type="short sequence motif" description="FGDF; binding to host G3BP1" evidence="3">
    <location>
        <begin position="1851"/>
        <end position="1854"/>
    </location>
</feature>
<feature type="short sequence motif" description="FGDF; binding to host G3BP1" evidence="3">
    <location>
        <begin position="1869"/>
        <end position="1872"/>
    </location>
</feature>
<feature type="active site" description="For cysteine protease nsP2 activity" evidence="8">
    <location>
        <position position="1013"/>
    </location>
</feature>
<feature type="active site" description="For cysteine protease nsP2 activity" evidence="8">
    <location>
        <position position="1083"/>
    </location>
</feature>
<feature type="binding site" evidence="9">
    <location>
        <begin position="721"/>
        <end position="728"/>
    </location>
    <ligand>
        <name>a ribonucleoside 5'-triphosphate</name>
        <dbReference type="ChEBI" id="CHEBI:61557"/>
    </ligand>
</feature>
<feature type="binding site" evidence="5">
    <location>
        <position position="1343"/>
    </location>
    <ligand>
        <name>ADP-D-ribose</name>
        <dbReference type="ChEBI" id="CHEBI:57967"/>
    </ligand>
</feature>
<feature type="binding site" evidence="6">
    <location>
        <position position="1357"/>
    </location>
    <ligand>
        <name>ADP-D-ribose</name>
        <dbReference type="ChEBI" id="CHEBI:57967"/>
    </ligand>
</feature>
<feature type="binding site" evidence="6">
    <location>
        <position position="1365"/>
    </location>
    <ligand>
        <name>ADP-D-ribose</name>
        <dbReference type="ChEBI" id="CHEBI:57967"/>
    </ligand>
</feature>
<feature type="binding site" evidence="5">
    <location>
        <position position="1445"/>
    </location>
    <ligand>
        <name>ADP-D-ribose</name>
        <dbReference type="ChEBI" id="CHEBI:57967"/>
    </ligand>
</feature>
<feature type="binding site" evidence="6">
    <location>
        <position position="1446"/>
    </location>
    <ligand>
        <name>ADP-D-ribose</name>
        <dbReference type="ChEBI" id="CHEBI:57967"/>
    </ligand>
</feature>
<feature type="binding site" evidence="6">
    <location>
        <position position="1447"/>
    </location>
    <ligand>
        <name>ADP-D-ribose</name>
        <dbReference type="ChEBI" id="CHEBI:57967"/>
    </ligand>
</feature>
<feature type="binding site" evidence="2">
    <location>
        <position position="1595"/>
    </location>
    <ligand>
        <name>Zn(2+)</name>
        <dbReference type="ChEBI" id="CHEBI:29105"/>
    </ligand>
</feature>
<feature type="binding site" evidence="2">
    <location>
        <position position="1597"/>
    </location>
    <ligand>
        <name>Zn(2+)</name>
        <dbReference type="ChEBI" id="CHEBI:29105"/>
    </ligand>
</feature>
<feature type="binding site" evidence="2">
    <location>
        <position position="1620"/>
    </location>
    <ligand>
        <name>Zn(2+)</name>
        <dbReference type="ChEBI" id="CHEBI:29105"/>
    </ligand>
</feature>
<feature type="binding site" evidence="2">
    <location>
        <position position="1638"/>
    </location>
    <ligand>
        <name>Zn(2+)</name>
        <dbReference type="ChEBI" id="CHEBI:29105"/>
    </ligand>
</feature>
<feature type="site" description="Involved in the phosphoramide link with 7-methyl-GMP" evidence="4">
    <location>
        <position position="37"/>
    </location>
</feature>
<feature type="site" description="Cleavage; by protease nsP2" evidence="2">
    <location>
        <begin position="535"/>
        <end position="536"/>
    </location>
</feature>
<feature type="site" description="Cleavage; by protease nsP2" evidence="2">
    <location>
        <begin position="1333"/>
        <end position="1334"/>
    </location>
</feature>
<feature type="site" description="Cleavage; by protease nsP2" evidence="6">
    <location>
        <begin position="1902"/>
        <end position="1903"/>
    </location>
</feature>
<feature type="lipid moiety-binding region" description="S-palmitoyl cysteine; by host" evidence="6">
    <location>
        <position position="417"/>
    </location>
</feature>
<feature type="lipid moiety-binding region" description="S-palmitoyl cysteine; by host" evidence="6">
    <location>
        <position position="419"/>
    </location>
</feature>
<proteinExistence type="inferred from homology"/>
<dbReference type="EC" id="2.1.1.-" evidence="4"/>
<dbReference type="EC" id="2.7.7.-" evidence="4"/>
<dbReference type="EC" id="3.4.22.-" evidence="6"/>
<dbReference type="EC" id="3.6.1.15" evidence="6"/>
<dbReference type="EC" id="3.6.1.74" evidence="3"/>
<dbReference type="EC" id="3.6.4.13" evidence="6"/>
<dbReference type="EC" id="3.1.3.84" evidence="6"/>
<dbReference type="EC" id="2.7.7.19" evidence="2"/>
<dbReference type="EC" id="2.7.7.48" evidence="7"/>
<dbReference type="EMBL" id="AF079457">
    <property type="protein sequence ID" value="AAC97206.1"/>
    <property type="molecule type" value="Genomic_RNA"/>
</dbReference>
<dbReference type="SMR" id="O90370"/>
<dbReference type="IntAct" id="O90370">
    <property type="interactions" value="2"/>
</dbReference>
<dbReference type="MEROPS" id="C09.001"/>
<dbReference type="Proteomes" id="UP000008382">
    <property type="component" value="Genome"/>
</dbReference>
<dbReference type="GO" id="GO:0044162">
    <property type="term" value="C:host cell cytoplasmic vesicle membrane"/>
    <property type="evidence" value="ECO:0007669"/>
    <property type="project" value="UniProtKB-SubCell"/>
</dbReference>
<dbReference type="GO" id="GO:0044176">
    <property type="term" value="C:host cell filopodium"/>
    <property type="evidence" value="ECO:0007669"/>
    <property type="project" value="UniProtKB-SubCell"/>
</dbReference>
<dbReference type="GO" id="GO:0042025">
    <property type="term" value="C:host cell nucleus"/>
    <property type="evidence" value="ECO:0007669"/>
    <property type="project" value="UniProtKB-SubCell"/>
</dbReference>
<dbReference type="GO" id="GO:0020002">
    <property type="term" value="C:host cell plasma membrane"/>
    <property type="evidence" value="ECO:0007669"/>
    <property type="project" value="UniProtKB-SubCell"/>
</dbReference>
<dbReference type="GO" id="GO:0016020">
    <property type="term" value="C:membrane"/>
    <property type="evidence" value="ECO:0007669"/>
    <property type="project" value="UniProtKB-KW"/>
</dbReference>
<dbReference type="GO" id="GO:0005524">
    <property type="term" value="F:ATP binding"/>
    <property type="evidence" value="ECO:0007669"/>
    <property type="project" value="UniProtKB-KW"/>
</dbReference>
<dbReference type="GO" id="GO:0016887">
    <property type="term" value="F:ATP hydrolysis activity"/>
    <property type="evidence" value="ECO:0007669"/>
    <property type="project" value="RHEA"/>
</dbReference>
<dbReference type="GO" id="GO:0008234">
    <property type="term" value="F:cysteine-type peptidase activity"/>
    <property type="evidence" value="ECO:0007669"/>
    <property type="project" value="UniProtKB-KW"/>
</dbReference>
<dbReference type="GO" id="GO:0005525">
    <property type="term" value="F:GTP binding"/>
    <property type="evidence" value="ECO:0007669"/>
    <property type="project" value="UniProtKB-KW"/>
</dbReference>
<dbReference type="GO" id="GO:0046872">
    <property type="term" value="F:metal ion binding"/>
    <property type="evidence" value="ECO:0007669"/>
    <property type="project" value="UniProtKB-KW"/>
</dbReference>
<dbReference type="GO" id="GO:0140818">
    <property type="term" value="F:mRNA 5'-triphosphate monophosphatase activity"/>
    <property type="evidence" value="ECO:0007669"/>
    <property type="project" value="RHEA"/>
</dbReference>
<dbReference type="GO" id="GO:0008174">
    <property type="term" value="F:mRNA methyltransferase activity"/>
    <property type="evidence" value="ECO:0007669"/>
    <property type="project" value="InterPro"/>
</dbReference>
<dbReference type="GO" id="GO:1990817">
    <property type="term" value="F:poly(A) RNA polymerase activity"/>
    <property type="evidence" value="ECO:0007669"/>
    <property type="project" value="UniProtKB-EC"/>
</dbReference>
<dbReference type="GO" id="GO:0004651">
    <property type="term" value="F:polynucleotide 5'-phosphatase activity"/>
    <property type="evidence" value="ECO:0007669"/>
    <property type="project" value="UniProtKB-EC"/>
</dbReference>
<dbReference type="GO" id="GO:0003723">
    <property type="term" value="F:RNA binding"/>
    <property type="evidence" value="ECO:0007669"/>
    <property type="project" value="UniProtKB-KW"/>
</dbReference>
<dbReference type="GO" id="GO:0003724">
    <property type="term" value="F:RNA helicase activity"/>
    <property type="evidence" value="ECO:0007669"/>
    <property type="project" value="UniProtKB-EC"/>
</dbReference>
<dbReference type="GO" id="GO:0003968">
    <property type="term" value="F:RNA-directed RNA polymerase activity"/>
    <property type="evidence" value="ECO:0007669"/>
    <property type="project" value="UniProtKB-KW"/>
</dbReference>
<dbReference type="GO" id="GO:0006370">
    <property type="term" value="P:7-methylguanosine mRNA capping"/>
    <property type="evidence" value="ECO:0007669"/>
    <property type="project" value="UniProtKB-KW"/>
</dbReference>
<dbReference type="GO" id="GO:0006351">
    <property type="term" value="P:DNA-templated transcription"/>
    <property type="evidence" value="ECO:0007669"/>
    <property type="project" value="InterPro"/>
</dbReference>
<dbReference type="GO" id="GO:0032259">
    <property type="term" value="P:methylation"/>
    <property type="evidence" value="ECO:0007669"/>
    <property type="project" value="UniProtKB-KW"/>
</dbReference>
<dbReference type="GO" id="GO:0016556">
    <property type="term" value="P:mRNA modification"/>
    <property type="evidence" value="ECO:0007669"/>
    <property type="project" value="InterPro"/>
</dbReference>
<dbReference type="GO" id="GO:0006508">
    <property type="term" value="P:proteolysis"/>
    <property type="evidence" value="ECO:0007669"/>
    <property type="project" value="UniProtKB-KW"/>
</dbReference>
<dbReference type="GO" id="GO:0039657">
    <property type="term" value="P:symbiont-mediated suppression of host gene expression"/>
    <property type="evidence" value="ECO:0007669"/>
    <property type="project" value="UniProtKB-KW"/>
</dbReference>
<dbReference type="GO" id="GO:0039523">
    <property type="term" value="P:symbiont-mediated suppression of host mRNA transcription via inhibition of RNA polymerase II activity"/>
    <property type="evidence" value="ECO:0007669"/>
    <property type="project" value="UniProtKB-KW"/>
</dbReference>
<dbReference type="GO" id="GO:0039694">
    <property type="term" value="P:viral RNA genome replication"/>
    <property type="evidence" value="ECO:0007669"/>
    <property type="project" value="InterPro"/>
</dbReference>
<dbReference type="CDD" id="cd21557">
    <property type="entry name" value="Macro_X_Nsp3-like"/>
    <property type="match status" value="1"/>
</dbReference>
<dbReference type="CDD" id="cd23250">
    <property type="entry name" value="Togaviridae_RdRp"/>
    <property type="match status" value="1"/>
</dbReference>
<dbReference type="FunFam" id="3.40.220.10:FF:000015">
    <property type="entry name" value="Polyprotein P1234"/>
    <property type="match status" value="1"/>
</dbReference>
<dbReference type="FunFam" id="3.40.50.150:FF:000323">
    <property type="entry name" value="Polyprotein P1234"/>
    <property type="match status" value="1"/>
</dbReference>
<dbReference type="FunFam" id="3.40.50.300:FF:001403">
    <property type="entry name" value="Polyprotein P1234"/>
    <property type="match status" value="1"/>
</dbReference>
<dbReference type="FunFam" id="3.40.50.300:FF:001415">
    <property type="entry name" value="Polyprotein P1234"/>
    <property type="match status" value="1"/>
</dbReference>
<dbReference type="Gene3D" id="3.90.70.110">
    <property type="entry name" value="Alphavirus nsP2 protease domain"/>
    <property type="match status" value="1"/>
</dbReference>
<dbReference type="Gene3D" id="3.40.220.10">
    <property type="entry name" value="Leucine Aminopeptidase, subunit E, domain 1"/>
    <property type="match status" value="1"/>
</dbReference>
<dbReference type="Gene3D" id="3.40.50.300">
    <property type="entry name" value="P-loop containing nucleotide triphosphate hydrolases"/>
    <property type="match status" value="2"/>
</dbReference>
<dbReference type="Gene3D" id="3.40.50.150">
    <property type="entry name" value="Vaccinia Virus protein VP39"/>
    <property type="match status" value="1"/>
</dbReference>
<dbReference type="InterPro" id="IPR027351">
    <property type="entry name" value="(+)RNA_virus_helicase_core_dom"/>
</dbReference>
<dbReference type="InterPro" id="IPR002588">
    <property type="entry name" value="Alphavirus-like_MT_dom"/>
</dbReference>
<dbReference type="InterPro" id="IPR002620">
    <property type="entry name" value="Alphavirus_nsp2pro"/>
</dbReference>
<dbReference type="InterPro" id="IPR044936">
    <property type="entry name" value="Alphavirus_nsp2pro_sf"/>
</dbReference>
<dbReference type="InterPro" id="IPR043502">
    <property type="entry name" value="DNA/RNA_pol_sf"/>
</dbReference>
<dbReference type="InterPro" id="IPR002589">
    <property type="entry name" value="Macro_dom"/>
</dbReference>
<dbReference type="InterPro" id="IPR043472">
    <property type="entry name" value="Macro_dom-like"/>
</dbReference>
<dbReference type="InterPro" id="IPR044371">
    <property type="entry name" value="Macro_X_NSP3-like"/>
</dbReference>
<dbReference type="InterPro" id="IPR048891">
    <property type="entry name" value="nsP3_ZBD"/>
</dbReference>
<dbReference type="InterPro" id="IPR027417">
    <property type="entry name" value="P-loop_NTPase"/>
</dbReference>
<dbReference type="InterPro" id="IPR001788">
    <property type="entry name" value="RNA-dep_RNA_pol_alsuvir"/>
</dbReference>
<dbReference type="InterPro" id="IPR007094">
    <property type="entry name" value="RNA-dir_pol_PSvirus"/>
</dbReference>
<dbReference type="InterPro" id="IPR029063">
    <property type="entry name" value="SAM-dependent_MTases_sf"/>
</dbReference>
<dbReference type="InterPro" id="IPR047311">
    <property type="entry name" value="Togaviridae_RdRp"/>
</dbReference>
<dbReference type="InterPro" id="IPR049329">
    <property type="entry name" value="ToMV_Hel_N"/>
</dbReference>
<dbReference type="Pfam" id="PF01661">
    <property type="entry name" value="Macro"/>
    <property type="match status" value="1"/>
</dbReference>
<dbReference type="Pfam" id="PF20852">
    <property type="entry name" value="nsP3_ZBD"/>
    <property type="match status" value="1"/>
</dbReference>
<dbReference type="Pfam" id="PF01707">
    <property type="entry name" value="Peptidase_C9"/>
    <property type="match status" value="1"/>
</dbReference>
<dbReference type="Pfam" id="PF00978">
    <property type="entry name" value="RdRP_2"/>
    <property type="match status" value="1"/>
</dbReference>
<dbReference type="Pfam" id="PF20896">
    <property type="entry name" value="ToMV_Hel_N"/>
    <property type="match status" value="1"/>
</dbReference>
<dbReference type="Pfam" id="PF01443">
    <property type="entry name" value="Viral_helicase1"/>
    <property type="match status" value="1"/>
</dbReference>
<dbReference type="Pfam" id="PF01660">
    <property type="entry name" value="Vmethyltransf"/>
    <property type="match status" value="1"/>
</dbReference>
<dbReference type="SMART" id="SM00506">
    <property type="entry name" value="A1pp"/>
    <property type="match status" value="1"/>
</dbReference>
<dbReference type="SUPFAM" id="SSF56672">
    <property type="entry name" value="DNA/RNA polymerases"/>
    <property type="match status" value="1"/>
</dbReference>
<dbReference type="SUPFAM" id="SSF52949">
    <property type="entry name" value="Macro domain-like"/>
    <property type="match status" value="1"/>
</dbReference>
<dbReference type="SUPFAM" id="SSF52540">
    <property type="entry name" value="P-loop containing nucleoside triphosphate hydrolases"/>
    <property type="match status" value="1"/>
</dbReference>
<dbReference type="PROSITE" id="PS51743">
    <property type="entry name" value="ALPHAVIRUS_MT"/>
    <property type="match status" value="1"/>
</dbReference>
<dbReference type="PROSITE" id="PS51154">
    <property type="entry name" value="MACRO"/>
    <property type="match status" value="1"/>
</dbReference>
<dbReference type="PROSITE" id="PS51520">
    <property type="entry name" value="NSP2PRO"/>
    <property type="match status" value="1"/>
</dbReference>
<dbReference type="PROSITE" id="PS51657">
    <property type="entry name" value="PSRV_HELICASE"/>
    <property type="match status" value="1"/>
</dbReference>
<dbReference type="PROSITE" id="PS50507">
    <property type="entry name" value="RDRP_SSRNA_POS"/>
    <property type="match status" value="1"/>
</dbReference>
<keyword id="KW-0067">ATP-binding</keyword>
<keyword id="KW-1262">Eukaryotic host gene expression shutoff by virus</keyword>
<keyword id="KW-1191">Eukaryotic host transcription shutoff by virus</keyword>
<keyword id="KW-0342">GTP-binding</keyword>
<keyword id="KW-0347">Helicase</keyword>
<keyword id="KW-1032">Host cell membrane</keyword>
<keyword id="KW-1034">Host cell projection</keyword>
<keyword id="KW-1035">Host cytoplasm</keyword>
<keyword id="KW-1036">Host cytoplasmic vesicle</keyword>
<keyword id="KW-1190">Host gene expression shutoff by virus</keyword>
<keyword id="KW-1043">Host membrane</keyword>
<keyword id="KW-1048">Host nucleus</keyword>
<keyword id="KW-0945">Host-virus interaction</keyword>
<keyword id="KW-0378">Hydrolase</keyword>
<keyword id="KW-1104">Inhibition of host RNA polymerase II by virus</keyword>
<keyword id="KW-0449">Lipoprotein</keyword>
<keyword id="KW-0472">Membrane</keyword>
<keyword id="KW-0479">Metal-binding</keyword>
<keyword id="KW-0489">Methyltransferase</keyword>
<keyword id="KW-0506">mRNA capping</keyword>
<keyword id="KW-0507">mRNA processing</keyword>
<keyword id="KW-0511">Multifunctional enzyme</keyword>
<keyword id="KW-0547">Nucleotide-binding</keyword>
<keyword id="KW-0548">Nucleotidyltransferase</keyword>
<keyword id="KW-0564">Palmitate</keyword>
<keyword id="KW-0597">Phosphoprotein</keyword>
<keyword id="KW-0645">Protease</keyword>
<keyword id="KW-1159">RNA suppression of termination</keyword>
<keyword id="KW-0694">RNA-binding</keyword>
<keyword id="KW-0696">RNA-directed RNA polymerase</keyword>
<keyword id="KW-0949">S-adenosyl-L-methionine</keyword>
<keyword id="KW-0788">Thiol protease</keyword>
<keyword id="KW-0808">Transferase</keyword>
<keyword id="KW-0832">Ubl conjugation</keyword>
<keyword id="KW-0693">Viral RNA replication</keyword>
<keyword id="KW-0862">Zinc</keyword>
<reference key="1">
    <citation type="journal article" date="1998" name="Virology">
        <title>Emergence of epidemic O'nyong-nyong fever in Uganda after a 35-year absence: genetic characterization of the virus.</title>
        <authorList>
            <person name="Lanciotti R.S."/>
            <person name="Ludwig M.L."/>
            <person name="Rwaguma E.B."/>
            <person name="Lutwama J.J."/>
            <person name="Kram T.M."/>
            <person name="Karabatsos N."/>
            <person name="Cropp B.C."/>
            <person name="Miller B.R."/>
        </authorList>
    </citation>
    <scope>NUCLEOTIDE SEQUENCE [GENOMIC RNA]</scope>
    <scope>ABSENCE OF READTHROUGH</scope>
</reference>